<reference key="1">
    <citation type="journal article" date="2004" name="Nat. Genet.">
        <title>Complete sequencing and characterization of 21,243 full-length human cDNAs.</title>
        <authorList>
            <person name="Ota T."/>
            <person name="Suzuki Y."/>
            <person name="Nishikawa T."/>
            <person name="Otsuki T."/>
            <person name="Sugiyama T."/>
            <person name="Irie R."/>
            <person name="Wakamatsu A."/>
            <person name="Hayashi K."/>
            <person name="Sato H."/>
            <person name="Nagai K."/>
            <person name="Kimura K."/>
            <person name="Makita H."/>
            <person name="Sekine M."/>
            <person name="Obayashi M."/>
            <person name="Nishi T."/>
            <person name="Shibahara T."/>
            <person name="Tanaka T."/>
            <person name="Ishii S."/>
            <person name="Yamamoto J."/>
            <person name="Saito K."/>
            <person name="Kawai Y."/>
            <person name="Isono Y."/>
            <person name="Nakamura Y."/>
            <person name="Nagahari K."/>
            <person name="Murakami K."/>
            <person name="Yasuda T."/>
            <person name="Iwayanagi T."/>
            <person name="Wagatsuma M."/>
            <person name="Shiratori A."/>
            <person name="Sudo H."/>
            <person name="Hosoiri T."/>
            <person name="Kaku Y."/>
            <person name="Kodaira H."/>
            <person name="Kondo H."/>
            <person name="Sugawara M."/>
            <person name="Takahashi M."/>
            <person name="Kanda K."/>
            <person name="Yokoi T."/>
            <person name="Furuya T."/>
            <person name="Kikkawa E."/>
            <person name="Omura Y."/>
            <person name="Abe K."/>
            <person name="Kamihara K."/>
            <person name="Katsuta N."/>
            <person name="Sato K."/>
            <person name="Tanikawa M."/>
            <person name="Yamazaki M."/>
            <person name="Ninomiya K."/>
            <person name="Ishibashi T."/>
            <person name="Yamashita H."/>
            <person name="Murakawa K."/>
            <person name="Fujimori K."/>
            <person name="Tanai H."/>
            <person name="Kimata M."/>
            <person name="Watanabe M."/>
            <person name="Hiraoka S."/>
            <person name="Chiba Y."/>
            <person name="Ishida S."/>
            <person name="Ono Y."/>
            <person name="Takiguchi S."/>
            <person name="Watanabe S."/>
            <person name="Yosida M."/>
            <person name="Hotuta T."/>
            <person name="Kusano J."/>
            <person name="Kanehori K."/>
            <person name="Takahashi-Fujii A."/>
            <person name="Hara H."/>
            <person name="Tanase T.-O."/>
            <person name="Nomura Y."/>
            <person name="Togiya S."/>
            <person name="Komai F."/>
            <person name="Hara R."/>
            <person name="Takeuchi K."/>
            <person name="Arita M."/>
            <person name="Imose N."/>
            <person name="Musashino K."/>
            <person name="Yuuki H."/>
            <person name="Oshima A."/>
            <person name="Sasaki N."/>
            <person name="Aotsuka S."/>
            <person name="Yoshikawa Y."/>
            <person name="Matsunawa H."/>
            <person name="Ichihara T."/>
            <person name="Shiohata N."/>
            <person name="Sano S."/>
            <person name="Moriya S."/>
            <person name="Momiyama H."/>
            <person name="Satoh N."/>
            <person name="Takami S."/>
            <person name="Terashima Y."/>
            <person name="Suzuki O."/>
            <person name="Nakagawa S."/>
            <person name="Senoh A."/>
            <person name="Mizoguchi H."/>
            <person name="Goto Y."/>
            <person name="Shimizu F."/>
            <person name="Wakebe H."/>
            <person name="Hishigaki H."/>
            <person name="Watanabe T."/>
            <person name="Sugiyama A."/>
            <person name="Takemoto M."/>
            <person name="Kawakami B."/>
            <person name="Yamazaki M."/>
            <person name="Watanabe K."/>
            <person name="Kumagai A."/>
            <person name="Itakura S."/>
            <person name="Fukuzumi Y."/>
            <person name="Fujimori Y."/>
            <person name="Komiyama M."/>
            <person name="Tashiro H."/>
            <person name="Tanigami A."/>
            <person name="Fujiwara T."/>
            <person name="Ono T."/>
            <person name="Yamada K."/>
            <person name="Fujii Y."/>
            <person name="Ozaki K."/>
            <person name="Hirao M."/>
            <person name="Ohmori Y."/>
            <person name="Kawabata A."/>
            <person name="Hikiji T."/>
            <person name="Kobatake N."/>
            <person name="Inagaki H."/>
            <person name="Ikema Y."/>
            <person name="Okamoto S."/>
            <person name="Okitani R."/>
            <person name="Kawakami T."/>
            <person name="Noguchi S."/>
            <person name="Itoh T."/>
            <person name="Shigeta K."/>
            <person name="Senba T."/>
            <person name="Matsumura K."/>
            <person name="Nakajima Y."/>
            <person name="Mizuno T."/>
            <person name="Morinaga M."/>
            <person name="Sasaki M."/>
            <person name="Togashi T."/>
            <person name="Oyama M."/>
            <person name="Hata H."/>
            <person name="Watanabe M."/>
            <person name="Komatsu T."/>
            <person name="Mizushima-Sugano J."/>
            <person name="Satoh T."/>
            <person name="Shirai Y."/>
            <person name="Takahashi Y."/>
            <person name="Nakagawa K."/>
            <person name="Okumura K."/>
            <person name="Nagase T."/>
            <person name="Nomura N."/>
            <person name="Kikuchi H."/>
            <person name="Masuho Y."/>
            <person name="Yamashita R."/>
            <person name="Nakai K."/>
            <person name="Yada T."/>
            <person name="Nakamura Y."/>
            <person name="Ohara O."/>
            <person name="Isogai T."/>
            <person name="Sugano S."/>
        </authorList>
    </citation>
    <scope>NUCLEOTIDE SEQUENCE [LARGE SCALE MRNA]</scope>
    <source>
        <tissue>Fetal brain</tissue>
    </source>
</reference>
<reference key="2">
    <citation type="journal article" date="2003" name="Nature">
        <title>The DNA sequence and analysis of human chromosome 14.</title>
        <authorList>
            <person name="Heilig R."/>
            <person name="Eckenberg R."/>
            <person name="Petit J.-L."/>
            <person name="Fonknechten N."/>
            <person name="Da Silva C."/>
            <person name="Cattolico L."/>
            <person name="Levy M."/>
            <person name="Barbe V."/>
            <person name="De Berardinis V."/>
            <person name="Ureta-Vidal A."/>
            <person name="Pelletier E."/>
            <person name="Vico V."/>
            <person name="Anthouard V."/>
            <person name="Rowen L."/>
            <person name="Madan A."/>
            <person name="Qin S."/>
            <person name="Sun H."/>
            <person name="Du H."/>
            <person name="Pepin K."/>
            <person name="Artiguenave F."/>
            <person name="Robert C."/>
            <person name="Cruaud C."/>
            <person name="Bruels T."/>
            <person name="Jaillon O."/>
            <person name="Friedlander L."/>
            <person name="Samson G."/>
            <person name="Brottier P."/>
            <person name="Cure S."/>
            <person name="Segurens B."/>
            <person name="Aniere F."/>
            <person name="Samain S."/>
            <person name="Crespeau H."/>
            <person name="Abbasi N."/>
            <person name="Aiach N."/>
            <person name="Boscus D."/>
            <person name="Dickhoff R."/>
            <person name="Dors M."/>
            <person name="Dubois I."/>
            <person name="Friedman C."/>
            <person name="Gouyvenoux M."/>
            <person name="James R."/>
            <person name="Madan A."/>
            <person name="Mairey-Estrada B."/>
            <person name="Mangenot S."/>
            <person name="Martins N."/>
            <person name="Menard M."/>
            <person name="Oztas S."/>
            <person name="Ratcliffe A."/>
            <person name="Shaffer T."/>
            <person name="Trask B."/>
            <person name="Vacherie B."/>
            <person name="Bellemere C."/>
            <person name="Belser C."/>
            <person name="Besnard-Gonnet M."/>
            <person name="Bartol-Mavel D."/>
            <person name="Boutard M."/>
            <person name="Briez-Silla S."/>
            <person name="Combette S."/>
            <person name="Dufosse-Laurent V."/>
            <person name="Ferron C."/>
            <person name="Lechaplais C."/>
            <person name="Louesse C."/>
            <person name="Muselet D."/>
            <person name="Magdelenat G."/>
            <person name="Pateau E."/>
            <person name="Petit E."/>
            <person name="Sirvain-Trukniewicz P."/>
            <person name="Trybou A."/>
            <person name="Vega-Czarny N."/>
            <person name="Bataille E."/>
            <person name="Bluet E."/>
            <person name="Bordelais I."/>
            <person name="Dubois M."/>
            <person name="Dumont C."/>
            <person name="Guerin T."/>
            <person name="Haffray S."/>
            <person name="Hammadi R."/>
            <person name="Muanga J."/>
            <person name="Pellouin V."/>
            <person name="Robert D."/>
            <person name="Wunderle E."/>
            <person name="Gauguet G."/>
            <person name="Roy A."/>
            <person name="Sainte-Marthe L."/>
            <person name="Verdier J."/>
            <person name="Verdier-Discala C."/>
            <person name="Hillier L.W."/>
            <person name="Fulton L."/>
            <person name="McPherson J."/>
            <person name="Matsuda F."/>
            <person name="Wilson R."/>
            <person name="Scarpelli C."/>
            <person name="Gyapay G."/>
            <person name="Wincker P."/>
            <person name="Saurin W."/>
            <person name="Quetier F."/>
            <person name="Waterston R."/>
            <person name="Hood L."/>
            <person name="Weissenbach J."/>
        </authorList>
    </citation>
    <scope>NUCLEOTIDE SEQUENCE [LARGE SCALE GENOMIC DNA]</scope>
</reference>
<reference key="3">
    <citation type="journal article" date="2004" name="Genome Res.">
        <title>The status, quality, and expansion of the NIH full-length cDNA project: the Mammalian Gene Collection (MGC).</title>
        <authorList>
            <consortium name="The MGC Project Team"/>
        </authorList>
    </citation>
    <scope>NUCLEOTIDE SEQUENCE [LARGE SCALE MRNA]</scope>
    <source>
        <tissue>Brain</tissue>
    </source>
</reference>
<reference key="4">
    <citation type="journal article" date="2006" name="Neuron">
        <title>SALM synaptic cell adhesion-like molecules regulate the differentiation of excitatory synapses.</title>
        <authorList>
            <person name="Ko J."/>
            <person name="Kim S."/>
            <person name="Chung H.S."/>
            <person name="Kim K."/>
            <person name="Han K."/>
            <person name="Kim H."/>
            <person name="Jun H."/>
            <person name="Kaang B.-K."/>
            <person name="Kim E."/>
        </authorList>
    </citation>
    <scope>LACK OF INTERACTION WITH DLG1; DLG2; DLG3 AND DLG4</scope>
</reference>
<reference key="5">
    <citation type="journal article" date="2008" name="J. Biol. Chem.">
        <title>The SALM family of adhesion-like molecules forms heteromeric and homomeric complexes.</title>
        <authorList>
            <person name="Seabold G.K."/>
            <person name="Wang P.Y."/>
            <person name="Chang K."/>
            <person name="Wang C.Y."/>
            <person name="Wang Y.X."/>
            <person name="Petralia R.S."/>
            <person name="Wenthold R.J."/>
        </authorList>
    </citation>
    <scope>FUNCTION</scope>
    <scope>INTERACTION WITH LRFN1; LRFN2; LRFN3; LRFN4 AND LRFN5</scope>
</reference>
<reference key="6">
    <citation type="journal article" date="2008" name="Mol. Cell. Neurosci.">
        <title>Synaptic adhesion-like molecules (SALMs) promote neurite outgrowth.</title>
        <authorList>
            <person name="Wang P.Y."/>
            <person name="Seabold G.K."/>
            <person name="Wenthold R.J."/>
        </authorList>
    </citation>
    <scope>FUNCTION</scope>
</reference>
<protein>
    <recommendedName>
        <fullName>Leucine-rich repeat and fibronectin type-III domain-containing protein 5</fullName>
    </recommendedName>
</protein>
<evidence type="ECO:0000250" key="1"/>
<evidence type="ECO:0000255" key="2"/>
<evidence type="ECO:0000255" key="3">
    <source>
        <dbReference type="PROSITE-ProRule" id="PRU00114"/>
    </source>
</evidence>
<evidence type="ECO:0000256" key="4">
    <source>
        <dbReference type="SAM" id="MobiDB-lite"/>
    </source>
</evidence>
<evidence type="ECO:0000269" key="5">
    <source>
    </source>
</evidence>
<evidence type="ECO:0000269" key="6">
    <source>
    </source>
</evidence>
<evidence type="ECO:0000305" key="7"/>
<evidence type="ECO:0007829" key="8">
    <source>
        <dbReference type="PDB" id="5XNQ"/>
    </source>
</evidence>
<evidence type="ECO:0007829" key="9">
    <source>
        <dbReference type="PDB" id="5XWS"/>
    </source>
</evidence>
<comment type="function">
    <text evidence="5 6">Cell adhesion molecule that mediates homophilic cell-cell adhesion in a Ca(2+)-independent manner. Promotes neurite outgrowth in hippocampal neurons.</text>
</comment>
<comment type="subunit">
    <text>Can form heteromeric complexes with LRFN1, LRFN2, LRFN3 and LFRN4. Able to form homomeric complexes across cell junctions, between adjacent cells. Does not interact with DLG1, DLG2, DLG3 and DLG4.</text>
</comment>
<comment type="subcellular location">
    <subcellularLocation>
        <location evidence="1">Membrane</location>
        <topology evidence="7">Single-pass type I membrane protein</topology>
    </subcellularLocation>
</comment>
<comment type="domain">
    <text>Lacks a cytoplasmic PDZ-binding motif, which has been implicated in function of related LRFN proteins.</text>
</comment>
<comment type="similarity">
    <text evidence="7">Belongs to the LRFN family.</text>
</comment>
<dbReference type="EMBL" id="AK055365">
    <property type="protein sequence ID" value="BAB70910.1"/>
    <property type="molecule type" value="mRNA"/>
</dbReference>
<dbReference type="EMBL" id="AK096627">
    <property type="protein sequence ID" value="BAG53340.1"/>
    <property type="molecule type" value="mRNA"/>
</dbReference>
<dbReference type="EMBL" id="AL138498">
    <property type="status" value="NOT_ANNOTATED_CDS"/>
    <property type="molecule type" value="Genomic_DNA"/>
</dbReference>
<dbReference type="EMBL" id="BC043165">
    <property type="protein sequence ID" value="AAH43165.1"/>
    <property type="molecule type" value="mRNA"/>
</dbReference>
<dbReference type="CCDS" id="CCDS9678.1"/>
<dbReference type="RefSeq" id="NP_001333102.1">
    <property type="nucleotide sequence ID" value="NM_001346173.2"/>
</dbReference>
<dbReference type="RefSeq" id="NP_689660.2">
    <property type="nucleotide sequence ID" value="NM_152447.4"/>
</dbReference>
<dbReference type="RefSeq" id="XP_016876537.1">
    <property type="nucleotide sequence ID" value="XM_017021048.1"/>
</dbReference>
<dbReference type="RefSeq" id="XP_047286985.1">
    <property type="nucleotide sequence ID" value="XM_047431029.1"/>
</dbReference>
<dbReference type="RefSeq" id="XP_054231462.1">
    <property type="nucleotide sequence ID" value="XM_054375487.1"/>
</dbReference>
<dbReference type="PDB" id="5XNP">
    <property type="method" value="X-ray"/>
    <property type="resolution" value="3.73 A"/>
    <property type="chains" value="A/B=18-374"/>
</dbReference>
<dbReference type="PDB" id="5XNQ">
    <property type="method" value="X-ray"/>
    <property type="resolution" value="2.80 A"/>
    <property type="chains" value="A=18-375"/>
</dbReference>
<dbReference type="PDB" id="5XWS">
    <property type="method" value="X-ray"/>
    <property type="resolution" value="3.08 A"/>
    <property type="chains" value="A=18-379"/>
</dbReference>
<dbReference type="PDB" id="5XWT">
    <property type="method" value="X-ray"/>
    <property type="resolution" value="4.18 A"/>
    <property type="chains" value="B/D=18-379"/>
</dbReference>
<dbReference type="PDBsum" id="5XNP"/>
<dbReference type="PDBsum" id="5XNQ"/>
<dbReference type="PDBsum" id="5XWS"/>
<dbReference type="PDBsum" id="5XWT"/>
<dbReference type="SMR" id="Q96NI6"/>
<dbReference type="BioGRID" id="126923">
    <property type="interactions" value="1"/>
</dbReference>
<dbReference type="FunCoup" id="Q96NI6">
    <property type="interactions" value="109"/>
</dbReference>
<dbReference type="IntAct" id="Q96NI6">
    <property type="interactions" value="1"/>
</dbReference>
<dbReference type="MINT" id="Q96NI6"/>
<dbReference type="STRING" id="9606.ENSP00000298119"/>
<dbReference type="GlyCosmos" id="Q96NI6">
    <property type="glycosylation" value="6 sites, No reported glycans"/>
</dbReference>
<dbReference type="GlyGen" id="Q96NI6">
    <property type="glycosylation" value="6 sites, 2 N-linked glycans (2 sites)"/>
</dbReference>
<dbReference type="iPTMnet" id="Q96NI6"/>
<dbReference type="PhosphoSitePlus" id="Q96NI6"/>
<dbReference type="BioMuta" id="LRFN5"/>
<dbReference type="DMDM" id="116242620"/>
<dbReference type="jPOST" id="Q96NI6"/>
<dbReference type="MassIVE" id="Q96NI6"/>
<dbReference type="PaxDb" id="9606-ENSP00000298119"/>
<dbReference type="PeptideAtlas" id="Q96NI6"/>
<dbReference type="ProteomicsDB" id="77517"/>
<dbReference type="Antibodypedia" id="78">
    <property type="antibodies" value="68 antibodies from 23 providers"/>
</dbReference>
<dbReference type="DNASU" id="145581"/>
<dbReference type="Ensembl" id="ENST00000298119.9">
    <property type="protein sequence ID" value="ENSP00000298119.4"/>
    <property type="gene ID" value="ENSG00000165379.14"/>
</dbReference>
<dbReference type="GeneID" id="145581"/>
<dbReference type="KEGG" id="hsa:145581"/>
<dbReference type="MANE-Select" id="ENST00000298119.9">
    <property type="protein sequence ID" value="ENSP00000298119.4"/>
    <property type="RefSeq nucleotide sequence ID" value="NM_152447.5"/>
    <property type="RefSeq protein sequence ID" value="NP_689660.2"/>
</dbReference>
<dbReference type="UCSC" id="uc001wvm.5">
    <property type="organism name" value="human"/>
</dbReference>
<dbReference type="AGR" id="HGNC:20360"/>
<dbReference type="CTD" id="145581"/>
<dbReference type="DisGeNET" id="145581"/>
<dbReference type="GeneCards" id="LRFN5"/>
<dbReference type="HGNC" id="HGNC:20360">
    <property type="gene designation" value="LRFN5"/>
</dbReference>
<dbReference type="HPA" id="ENSG00000165379">
    <property type="expression patterns" value="Tissue enhanced (brain, cervix, parathyroid gland)"/>
</dbReference>
<dbReference type="MIM" id="612811">
    <property type="type" value="gene"/>
</dbReference>
<dbReference type="neXtProt" id="NX_Q96NI6"/>
<dbReference type="OpenTargets" id="ENSG00000165379"/>
<dbReference type="PharmGKB" id="PA134888453"/>
<dbReference type="VEuPathDB" id="HostDB:ENSG00000165379"/>
<dbReference type="eggNOG" id="KOG0619">
    <property type="taxonomic scope" value="Eukaryota"/>
</dbReference>
<dbReference type="GeneTree" id="ENSGT00940000158296"/>
<dbReference type="HOGENOM" id="CLU_016998_0_0_1"/>
<dbReference type="InParanoid" id="Q96NI6"/>
<dbReference type="OMA" id="EENAQCF"/>
<dbReference type="OrthoDB" id="1394818at2759"/>
<dbReference type="PAN-GO" id="Q96NI6">
    <property type="GO annotations" value="6 GO annotations based on evolutionary models"/>
</dbReference>
<dbReference type="PhylomeDB" id="Q96NI6"/>
<dbReference type="TreeFam" id="TF350185"/>
<dbReference type="PathwayCommons" id="Q96NI6"/>
<dbReference type="SIGNOR" id="Q96NI6"/>
<dbReference type="BioGRID-ORCS" id="145581">
    <property type="hits" value="7 hits in 1152 CRISPR screens"/>
</dbReference>
<dbReference type="CD-CODE" id="91857CE7">
    <property type="entry name" value="Nucleolus"/>
</dbReference>
<dbReference type="ChiTaRS" id="LRFN5">
    <property type="organism name" value="human"/>
</dbReference>
<dbReference type="GenomeRNAi" id="145581"/>
<dbReference type="Pharos" id="Q96NI6">
    <property type="development level" value="Tbio"/>
</dbReference>
<dbReference type="PRO" id="PR:Q96NI6"/>
<dbReference type="Proteomes" id="UP000005640">
    <property type="component" value="Chromosome 14"/>
</dbReference>
<dbReference type="RNAct" id="Q96NI6">
    <property type="molecule type" value="protein"/>
</dbReference>
<dbReference type="Bgee" id="ENSG00000165379">
    <property type="expression patterns" value="Expressed in middle temporal gyrus and 137 other cell types or tissues"/>
</dbReference>
<dbReference type="ExpressionAtlas" id="Q96NI6">
    <property type="expression patterns" value="baseline and differential"/>
</dbReference>
<dbReference type="GO" id="GO:0009986">
    <property type="term" value="C:cell surface"/>
    <property type="evidence" value="ECO:0000318"/>
    <property type="project" value="GO_Central"/>
</dbReference>
<dbReference type="GO" id="GO:0098982">
    <property type="term" value="C:GABA-ergic synapse"/>
    <property type="evidence" value="ECO:0000318"/>
    <property type="project" value="GO_Central"/>
</dbReference>
<dbReference type="GO" id="GO:0098978">
    <property type="term" value="C:glutamatergic synapse"/>
    <property type="evidence" value="ECO:0000318"/>
    <property type="project" value="GO_Central"/>
</dbReference>
<dbReference type="GO" id="GO:0098839">
    <property type="term" value="C:postsynaptic density membrane"/>
    <property type="evidence" value="ECO:0000318"/>
    <property type="project" value="GO_Central"/>
</dbReference>
<dbReference type="GO" id="GO:0050728">
    <property type="term" value="P:negative regulation of inflammatory response"/>
    <property type="evidence" value="ECO:0000314"/>
    <property type="project" value="UniProtKB"/>
</dbReference>
<dbReference type="GO" id="GO:0043031">
    <property type="term" value="P:negative regulation of macrophage activation"/>
    <property type="evidence" value="ECO:0000250"/>
    <property type="project" value="UniProtKB"/>
</dbReference>
<dbReference type="GO" id="GO:1905606">
    <property type="term" value="P:regulation of presynapse assembly"/>
    <property type="evidence" value="ECO:0000318"/>
    <property type="project" value="GO_Central"/>
</dbReference>
<dbReference type="GO" id="GO:0099560">
    <property type="term" value="P:synaptic membrane adhesion"/>
    <property type="evidence" value="ECO:0000318"/>
    <property type="project" value="GO_Central"/>
</dbReference>
<dbReference type="CDD" id="cd05764">
    <property type="entry name" value="IgI_SALM5_like"/>
    <property type="match status" value="1"/>
</dbReference>
<dbReference type="FunFam" id="3.80.10.10:FF:000025">
    <property type="entry name" value="Leucine rich repeat and fibronectin type III domain containing 5"/>
    <property type="match status" value="1"/>
</dbReference>
<dbReference type="FunFam" id="2.60.40.10:FF:000235">
    <property type="entry name" value="Leucine-rich repeat and fibronectin type III domain-containing 2"/>
    <property type="match status" value="1"/>
</dbReference>
<dbReference type="FunFam" id="2.60.40.10:FF:000091">
    <property type="entry name" value="Leucine-rich repeat and fibronectin type III domain-containing protein 1"/>
    <property type="match status" value="1"/>
</dbReference>
<dbReference type="FunFam" id="3.80.10.10:FF:000016">
    <property type="entry name" value="Leucine-rich repeat and fibronectin type III domain-containing protein 1"/>
    <property type="match status" value="1"/>
</dbReference>
<dbReference type="Gene3D" id="2.60.40.10">
    <property type="entry name" value="Immunoglobulins"/>
    <property type="match status" value="2"/>
</dbReference>
<dbReference type="Gene3D" id="3.80.10.10">
    <property type="entry name" value="Ribonuclease Inhibitor"/>
    <property type="match status" value="2"/>
</dbReference>
<dbReference type="InterPro" id="IPR036116">
    <property type="entry name" value="FN3_sf"/>
</dbReference>
<dbReference type="InterPro" id="IPR007110">
    <property type="entry name" value="Ig-like_dom"/>
</dbReference>
<dbReference type="InterPro" id="IPR036179">
    <property type="entry name" value="Ig-like_dom_sf"/>
</dbReference>
<dbReference type="InterPro" id="IPR013783">
    <property type="entry name" value="Ig-like_fold"/>
</dbReference>
<dbReference type="InterPro" id="IPR013098">
    <property type="entry name" value="Ig_I-set"/>
</dbReference>
<dbReference type="InterPro" id="IPR003599">
    <property type="entry name" value="Ig_sub"/>
</dbReference>
<dbReference type="InterPro" id="IPR003598">
    <property type="entry name" value="Ig_sub2"/>
</dbReference>
<dbReference type="InterPro" id="IPR001611">
    <property type="entry name" value="Leu-rich_rpt"/>
</dbReference>
<dbReference type="InterPro" id="IPR003591">
    <property type="entry name" value="Leu-rich_rpt_typical-subtyp"/>
</dbReference>
<dbReference type="InterPro" id="IPR050467">
    <property type="entry name" value="LRFN"/>
</dbReference>
<dbReference type="InterPro" id="IPR032675">
    <property type="entry name" value="LRR_dom_sf"/>
</dbReference>
<dbReference type="PANTHER" id="PTHR45842:SF10">
    <property type="entry name" value="LEUCINE-RICH REPEAT AND FIBRONECTIN TYPE-III DOMAIN-CONTAINING PROTEIN 5"/>
    <property type="match status" value="1"/>
</dbReference>
<dbReference type="PANTHER" id="PTHR45842">
    <property type="entry name" value="SYNAPTIC ADHESION-LIKE MOLECULE SALM"/>
    <property type="match status" value="1"/>
</dbReference>
<dbReference type="Pfam" id="PF07679">
    <property type="entry name" value="I-set"/>
    <property type="match status" value="1"/>
</dbReference>
<dbReference type="Pfam" id="PF13855">
    <property type="entry name" value="LRR_8"/>
    <property type="match status" value="2"/>
</dbReference>
<dbReference type="SMART" id="SM00409">
    <property type="entry name" value="IG"/>
    <property type="match status" value="1"/>
</dbReference>
<dbReference type="SMART" id="SM00408">
    <property type="entry name" value="IGc2"/>
    <property type="match status" value="1"/>
</dbReference>
<dbReference type="SMART" id="SM00369">
    <property type="entry name" value="LRR_TYP"/>
    <property type="match status" value="6"/>
</dbReference>
<dbReference type="SUPFAM" id="SSF49265">
    <property type="entry name" value="Fibronectin type III"/>
    <property type="match status" value="1"/>
</dbReference>
<dbReference type="SUPFAM" id="SSF48726">
    <property type="entry name" value="Immunoglobulin"/>
    <property type="match status" value="1"/>
</dbReference>
<dbReference type="SUPFAM" id="SSF52058">
    <property type="entry name" value="L domain-like"/>
    <property type="match status" value="1"/>
</dbReference>
<dbReference type="PROSITE" id="PS50835">
    <property type="entry name" value="IG_LIKE"/>
    <property type="match status" value="1"/>
</dbReference>
<dbReference type="PROSITE" id="PS51450">
    <property type="entry name" value="LRR"/>
    <property type="match status" value="6"/>
</dbReference>
<keyword id="KW-0002">3D-structure</keyword>
<keyword id="KW-1015">Disulfide bond</keyword>
<keyword id="KW-0325">Glycoprotein</keyword>
<keyword id="KW-0393">Immunoglobulin domain</keyword>
<keyword id="KW-0433">Leucine-rich repeat</keyword>
<keyword id="KW-0472">Membrane</keyword>
<keyword id="KW-1267">Proteomics identification</keyword>
<keyword id="KW-1185">Reference proteome</keyword>
<keyword id="KW-0677">Repeat</keyword>
<keyword id="KW-0732">Signal</keyword>
<keyword id="KW-0812">Transmembrane</keyword>
<keyword id="KW-1133">Transmembrane helix</keyword>
<name>LRFN5_HUMAN</name>
<sequence>MEKILFYLFLIGIAVKAQICPKRCVCQILSPNLATLCAKKGLLFVPPNIDRRTVELRLADNFVTNIKRKDFANMTSLVDLTLSRNTISFITPHAFADLRNLRALHLNSNRLTKITNDMFSGLSNLHHLILNNNQLTLISSTAFDDVFALEELDLSYNNLETIPWDAVEKMVSLHTLSLDHNMIDNIPKGTFSHLHKMTRLDVTSNKLQKLPPDPLFQRAQVLATSGIISPSTFALSFGGNPLHCNCELLWLRRLSREDDLETCASPPLLTGRYFWSIPEEEFLCEPPLITRHTHEMRVLEGQRATLRCKARGDPEPAIHWISPEGKLISNATRSLVYDNGTLDILITTVKDTGAFTCIASNPAGEATQIVDLHIIKLPHLLNSTNHIHEPDPGSSDISTSTKSGSNTSSSNGDTKLSQDKIVVAEATSSTALLKFNFQRNIPGIRMFQIQYNGTYDDTLVYRMIPPTSKTFLVNNLAAGTMYDLCVLAIYDDGITSLTATRVVGCIQFTTEQDYVRCHFMQSQFLGGTMIIIIGGIIVASVLVFIIILMIRYKVCNNNGQHKVTKVSNVYSQTNGAQIQGCSVTLPQSVSKQAVGHEENAQCCKATSDNVIQSSETCSSQDSSTTTSALPPSWTSSTSVSQKQKRKTGTKPSTEPQNEAVTNVESQNTNRNNSTALQLASRPPDSVTEGPTSKRAHIKPNALLTNVDQIVQETQRLELI</sequence>
<organism>
    <name type="scientific">Homo sapiens</name>
    <name type="common">Human</name>
    <dbReference type="NCBI Taxonomy" id="9606"/>
    <lineage>
        <taxon>Eukaryota</taxon>
        <taxon>Metazoa</taxon>
        <taxon>Chordata</taxon>
        <taxon>Craniata</taxon>
        <taxon>Vertebrata</taxon>
        <taxon>Euteleostomi</taxon>
        <taxon>Mammalia</taxon>
        <taxon>Eutheria</taxon>
        <taxon>Euarchontoglires</taxon>
        <taxon>Primates</taxon>
        <taxon>Haplorrhini</taxon>
        <taxon>Catarrhini</taxon>
        <taxon>Hominidae</taxon>
        <taxon>Homo</taxon>
    </lineage>
</organism>
<proteinExistence type="evidence at protein level"/>
<accession>Q96NI6</accession>
<accession>B3KU78</accession>
<accession>Q86XL2</accession>
<gene>
    <name type="primary">LRFN5</name>
    <name type="synonym">C14orf146</name>
    <name type="synonym">SALM5</name>
</gene>
<feature type="signal peptide" evidence="2">
    <location>
        <begin position="1"/>
        <end position="17"/>
    </location>
</feature>
<feature type="chain" id="PRO_0000014845" description="Leucine-rich repeat and fibronectin type-III domain-containing protein 5">
    <location>
        <begin position="18"/>
        <end position="719"/>
    </location>
</feature>
<feature type="topological domain" description="Extracellular" evidence="2">
    <location>
        <begin position="18"/>
        <end position="529"/>
    </location>
</feature>
<feature type="transmembrane region" description="Helical" evidence="2">
    <location>
        <begin position="530"/>
        <end position="550"/>
    </location>
</feature>
<feature type="topological domain" description="Cytoplasmic" evidence="2">
    <location>
        <begin position="551"/>
        <end position="719"/>
    </location>
</feature>
<feature type="domain" description="LRRNT">
    <location>
        <begin position="18"/>
        <end position="51"/>
    </location>
</feature>
<feature type="repeat" description="LRR 1">
    <location>
        <begin position="52"/>
        <end position="73"/>
    </location>
</feature>
<feature type="repeat" description="LRR 2">
    <location>
        <begin position="76"/>
        <end position="97"/>
    </location>
</feature>
<feature type="repeat" description="LRR 3">
    <location>
        <begin position="100"/>
        <end position="121"/>
    </location>
</feature>
<feature type="repeat" description="LRR 4">
    <location>
        <begin position="124"/>
        <end position="145"/>
    </location>
</feature>
<feature type="repeat" description="LRR 5">
    <location>
        <begin position="148"/>
        <end position="169"/>
    </location>
</feature>
<feature type="repeat" description="LRR 6">
    <location>
        <begin position="172"/>
        <end position="193"/>
    </location>
</feature>
<feature type="repeat" description="LRR 7">
    <location>
        <begin position="196"/>
        <end position="217"/>
    </location>
</feature>
<feature type="domain" description="LRRCT">
    <location>
        <begin position="240"/>
        <end position="286"/>
    </location>
</feature>
<feature type="domain" description="Ig-like">
    <location>
        <begin position="287"/>
        <end position="373"/>
    </location>
</feature>
<feature type="domain" description="Fibronectin type-III">
    <location>
        <begin position="414"/>
        <end position="503"/>
    </location>
</feature>
<feature type="region of interest" description="Disordered" evidence="4">
    <location>
        <begin position="385"/>
        <end position="414"/>
    </location>
</feature>
<feature type="region of interest" description="Disordered" evidence="4">
    <location>
        <begin position="615"/>
        <end position="694"/>
    </location>
</feature>
<feature type="compositionally biased region" description="Low complexity" evidence="4">
    <location>
        <begin position="393"/>
        <end position="414"/>
    </location>
</feature>
<feature type="compositionally biased region" description="Low complexity" evidence="4">
    <location>
        <begin position="615"/>
        <end position="627"/>
    </location>
</feature>
<feature type="compositionally biased region" description="Polar residues" evidence="4">
    <location>
        <begin position="628"/>
        <end position="641"/>
    </location>
</feature>
<feature type="compositionally biased region" description="Polar residues" evidence="4">
    <location>
        <begin position="649"/>
        <end position="677"/>
    </location>
</feature>
<feature type="glycosylation site" description="N-linked (GlcNAc...) asparagine" evidence="2">
    <location>
        <position position="73"/>
    </location>
</feature>
<feature type="glycosylation site" description="N-linked (GlcNAc...) asparagine" evidence="2">
    <location>
        <position position="330"/>
    </location>
</feature>
<feature type="glycosylation site" description="N-linked (GlcNAc...) asparagine" evidence="2">
    <location>
        <position position="339"/>
    </location>
</feature>
<feature type="glycosylation site" description="N-linked (GlcNAc...) asparagine" evidence="2">
    <location>
        <position position="382"/>
    </location>
</feature>
<feature type="glycosylation site" description="N-linked (GlcNAc...) asparagine" evidence="2">
    <location>
        <position position="406"/>
    </location>
</feature>
<feature type="glycosylation site" description="N-linked (GlcNAc...) asparagine" evidence="2">
    <location>
        <position position="452"/>
    </location>
</feature>
<feature type="disulfide bond" evidence="3">
    <location>
        <begin position="308"/>
        <end position="357"/>
    </location>
</feature>
<feature type="sequence conflict" description="In Ref. 1; BAG53340." evidence="7" ref="1">
    <original>F</original>
    <variation>L</variation>
    <location>
        <position position="544"/>
    </location>
</feature>
<feature type="sequence conflict" description="In Ref. 1; BAB70910." evidence="7" ref="1">
    <original>A</original>
    <variation>V</variation>
    <location>
        <position position="679"/>
    </location>
</feature>
<feature type="strand" evidence="8">
    <location>
        <begin position="24"/>
        <end position="29"/>
    </location>
</feature>
<feature type="strand" evidence="8">
    <location>
        <begin position="32"/>
        <end position="36"/>
    </location>
</feature>
<feature type="strand" evidence="8">
    <location>
        <begin position="54"/>
        <end position="57"/>
    </location>
</feature>
<feature type="helix" evidence="9">
    <location>
        <begin position="68"/>
        <end position="71"/>
    </location>
</feature>
<feature type="strand" evidence="8">
    <location>
        <begin position="79"/>
        <end position="81"/>
    </location>
</feature>
<feature type="strand" evidence="8">
    <location>
        <begin position="103"/>
        <end position="105"/>
    </location>
</feature>
<feature type="strand" evidence="8">
    <location>
        <begin position="116"/>
        <end position="119"/>
    </location>
</feature>
<feature type="strand" evidence="8">
    <location>
        <begin position="127"/>
        <end position="129"/>
    </location>
</feature>
<feature type="turn" evidence="8">
    <location>
        <begin position="140"/>
        <end position="145"/>
    </location>
</feature>
<feature type="strand" evidence="8">
    <location>
        <begin position="150"/>
        <end position="153"/>
    </location>
</feature>
<feature type="helix" evidence="8">
    <location>
        <begin position="164"/>
        <end position="167"/>
    </location>
</feature>
<feature type="strand" evidence="8">
    <location>
        <begin position="175"/>
        <end position="177"/>
    </location>
</feature>
<feature type="turn" evidence="8">
    <location>
        <begin position="188"/>
        <end position="193"/>
    </location>
</feature>
<feature type="strand" evidence="8">
    <location>
        <begin position="199"/>
        <end position="201"/>
    </location>
</feature>
<feature type="helix" evidence="8">
    <location>
        <begin position="214"/>
        <end position="218"/>
    </location>
</feature>
<feature type="strand" evidence="8">
    <location>
        <begin position="224"/>
        <end position="227"/>
    </location>
</feature>
<feature type="strand" evidence="8">
    <location>
        <begin position="234"/>
        <end position="236"/>
    </location>
</feature>
<feature type="helix" evidence="8">
    <location>
        <begin position="246"/>
        <end position="248"/>
    </location>
</feature>
<feature type="helix" evidence="8">
    <location>
        <begin position="249"/>
        <end position="253"/>
    </location>
</feature>
<feature type="strand" evidence="8">
    <location>
        <begin position="262"/>
        <end position="266"/>
    </location>
</feature>
<feature type="helix" evidence="8">
    <location>
        <begin position="267"/>
        <end position="269"/>
    </location>
</feature>
<feature type="helix" evidence="8">
    <location>
        <begin position="274"/>
        <end position="276"/>
    </location>
</feature>
<feature type="helix" evidence="8">
    <location>
        <begin position="279"/>
        <end position="281"/>
    </location>
</feature>